<protein>
    <recommendedName>
        <fullName>Putative S-adenosyl-L-methionine-dependent methyltransferase Rv0893c</fullName>
        <ecNumber>2.1.1.-</ecNumber>
    </recommendedName>
</protein>
<comment type="function">
    <text evidence="1">Exhibits S-adenosyl-L-methionine-dependent methyltransferase activity.</text>
</comment>
<comment type="similarity">
    <text evidence="2">Belongs to the UPF0677 family.</text>
</comment>
<accession>P9WFI1</accession>
<accession>L0T579</accession>
<accession>P64747</accession>
<accession>Q10552</accession>
<sequence length="325" mass="36073">MRTEDDSWDVTTSVGSTGLLVAAARALETQKADPLAIDPYAEVFCRAAGGEWADVLDGKLPDHYLTTGDFGEHFVNFQGARTRYFDEYFSRATAAGMKQVVILAAGLDSRAFRLQWPIGTTIFELDRPQVLDFKNAVLADYHIRPRAQRRSVAVDLRDEWQIALCNNGFDANRPSAWIAEGLLVYLSAEAQQRLFIGIDTLASPGSHVAVEEATPLDPCEFAAKLERERAANAQGDPRRFFQMVYNERWARATEWFDERGWRATATPLAEYLRRVGRAVPEADTEAAPMVTAITFVSAVRTGLVADPARTSPSSTSIGFKRFEAD</sequence>
<keyword id="KW-0489">Methyltransferase</keyword>
<keyword id="KW-1185">Reference proteome</keyword>
<keyword id="KW-0949">S-adenosyl-L-methionine</keyword>
<keyword id="KW-0808">Transferase</keyword>
<feature type="chain" id="PRO_0000103733" description="Putative S-adenosyl-L-methionine-dependent methyltransferase Rv0893c">
    <location>
        <begin position="1"/>
        <end position="325"/>
    </location>
</feature>
<feature type="binding site" evidence="1">
    <location>
        <position position="126"/>
    </location>
    <ligand>
        <name>S-adenosyl-L-methionine</name>
        <dbReference type="ChEBI" id="CHEBI:59789"/>
    </ligand>
</feature>
<feature type="binding site" evidence="1">
    <location>
        <begin position="155"/>
        <end position="156"/>
    </location>
    <ligand>
        <name>S-adenosyl-L-methionine</name>
        <dbReference type="ChEBI" id="CHEBI:59789"/>
    </ligand>
</feature>
<evidence type="ECO:0000250" key="1"/>
<evidence type="ECO:0000305" key="2"/>
<organism>
    <name type="scientific">Mycobacterium tuberculosis (strain ATCC 25618 / H37Rv)</name>
    <dbReference type="NCBI Taxonomy" id="83332"/>
    <lineage>
        <taxon>Bacteria</taxon>
        <taxon>Bacillati</taxon>
        <taxon>Actinomycetota</taxon>
        <taxon>Actinomycetes</taxon>
        <taxon>Mycobacteriales</taxon>
        <taxon>Mycobacteriaceae</taxon>
        <taxon>Mycobacterium</taxon>
        <taxon>Mycobacterium tuberculosis complex</taxon>
    </lineage>
</organism>
<name>Y893_MYCTU</name>
<dbReference type="EC" id="2.1.1.-"/>
<dbReference type="EMBL" id="AL123456">
    <property type="protein sequence ID" value="CCP43641.1"/>
    <property type="molecule type" value="Genomic_DNA"/>
</dbReference>
<dbReference type="PIR" id="B70782">
    <property type="entry name" value="B70782"/>
</dbReference>
<dbReference type="RefSeq" id="NP_215408.1">
    <property type="nucleotide sequence ID" value="NC_000962.3"/>
</dbReference>
<dbReference type="RefSeq" id="WP_003404654.1">
    <property type="nucleotide sequence ID" value="NZ_NVQJ01000001.1"/>
</dbReference>
<dbReference type="SMR" id="P9WFI1"/>
<dbReference type="FunCoup" id="P9WFI1">
    <property type="interactions" value="1"/>
</dbReference>
<dbReference type="STRING" id="83332.Rv0893c"/>
<dbReference type="PaxDb" id="83332-Rv0893c"/>
<dbReference type="DNASU" id="885477"/>
<dbReference type="GeneID" id="885477"/>
<dbReference type="KEGG" id="mtu:Rv0893c"/>
<dbReference type="KEGG" id="mtv:RVBD_0893c"/>
<dbReference type="TubercuList" id="Rv0893c"/>
<dbReference type="eggNOG" id="COG3315">
    <property type="taxonomic scope" value="Bacteria"/>
</dbReference>
<dbReference type="InParanoid" id="P9WFI1"/>
<dbReference type="OrthoDB" id="9806164at2"/>
<dbReference type="PhylomeDB" id="P9WFI1"/>
<dbReference type="Proteomes" id="UP000001584">
    <property type="component" value="Chromosome"/>
</dbReference>
<dbReference type="GO" id="GO:0008168">
    <property type="term" value="F:methyltransferase activity"/>
    <property type="evidence" value="ECO:0007669"/>
    <property type="project" value="UniProtKB-KW"/>
</dbReference>
<dbReference type="GO" id="GO:0032259">
    <property type="term" value="P:methylation"/>
    <property type="evidence" value="ECO:0007669"/>
    <property type="project" value="UniProtKB-KW"/>
</dbReference>
<dbReference type="FunFam" id="3.40.50.150:FF:000152">
    <property type="entry name" value="S-adenosyl-L-methionine-dependent methyltransferase"/>
    <property type="match status" value="1"/>
</dbReference>
<dbReference type="Gene3D" id="3.40.50.150">
    <property type="entry name" value="Vaccinia Virus protein VP39"/>
    <property type="match status" value="1"/>
</dbReference>
<dbReference type="InterPro" id="IPR007213">
    <property type="entry name" value="Ppm1/Ppm2/Tcmp"/>
</dbReference>
<dbReference type="InterPro" id="IPR029063">
    <property type="entry name" value="SAM-dependent_MTases_sf"/>
</dbReference>
<dbReference type="InterPro" id="IPR011610">
    <property type="entry name" value="SAM_mthyl_Trfase_ML2640-like"/>
</dbReference>
<dbReference type="NCBIfam" id="TIGR00027">
    <property type="entry name" value="mthyl_TIGR00027"/>
    <property type="match status" value="1"/>
</dbReference>
<dbReference type="PANTHER" id="PTHR43619">
    <property type="entry name" value="S-ADENOSYL-L-METHIONINE-DEPENDENT METHYLTRANSFERASE YKTD-RELATED"/>
    <property type="match status" value="1"/>
</dbReference>
<dbReference type="PANTHER" id="PTHR43619:SF2">
    <property type="entry name" value="S-ADENOSYL-L-METHIONINE-DEPENDENT METHYLTRANSFERASES SUPERFAMILY PROTEIN"/>
    <property type="match status" value="1"/>
</dbReference>
<dbReference type="Pfam" id="PF04072">
    <property type="entry name" value="LCM"/>
    <property type="match status" value="1"/>
</dbReference>
<dbReference type="SUPFAM" id="SSF53335">
    <property type="entry name" value="S-adenosyl-L-methionine-dependent methyltransferases"/>
    <property type="match status" value="1"/>
</dbReference>
<gene>
    <name type="ordered locus">Rv0893c</name>
    <name type="ORF">MTCY31.21c</name>
</gene>
<proteinExistence type="evidence at protein level"/>
<reference key="1">
    <citation type="journal article" date="1998" name="Nature">
        <title>Deciphering the biology of Mycobacterium tuberculosis from the complete genome sequence.</title>
        <authorList>
            <person name="Cole S.T."/>
            <person name="Brosch R."/>
            <person name="Parkhill J."/>
            <person name="Garnier T."/>
            <person name="Churcher C.M."/>
            <person name="Harris D.E."/>
            <person name="Gordon S.V."/>
            <person name="Eiglmeier K."/>
            <person name="Gas S."/>
            <person name="Barry C.E. III"/>
            <person name="Tekaia F."/>
            <person name="Badcock K."/>
            <person name="Basham D."/>
            <person name="Brown D."/>
            <person name="Chillingworth T."/>
            <person name="Connor R."/>
            <person name="Davies R.M."/>
            <person name="Devlin K."/>
            <person name="Feltwell T."/>
            <person name="Gentles S."/>
            <person name="Hamlin N."/>
            <person name="Holroyd S."/>
            <person name="Hornsby T."/>
            <person name="Jagels K."/>
            <person name="Krogh A."/>
            <person name="McLean J."/>
            <person name="Moule S."/>
            <person name="Murphy L.D."/>
            <person name="Oliver S."/>
            <person name="Osborne J."/>
            <person name="Quail M.A."/>
            <person name="Rajandream M.A."/>
            <person name="Rogers J."/>
            <person name="Rutter S."/>
            <person name="Seeger K."/>
            <person name="Skelton S."/>
            <person name="Squares S."/>
            <person name="Squares R."/>
            <person name="Sulston J.E."/>
            <person name="Taylor K."/>
            <person name="Whitehead S."/>
            <person name="Barrell B.G."/>
        </authorList>
    </citation>
    <scope>NUCLEOTIDE SEQUENCE [LARGE SCALE GENOMIC DNA]</scope>
    <source>
        <strain>ATCC 25618 / H37Rv</strain>
    </source>
</reference>
<reference key="2">
    <citation type="journal article" date="2011" name="Mol. Cell. Proteomics">
        <title>Proteogenomic analysis of Mycobacterium tuberculosis by high resolution mass spectrometry.</title>
        <authorList>
            <person name="Kelkar D.S."/>
            <person name="Kumar D."/>
            <person name="Kumar P."/>
            <person name="Balakrishnan L."/>
            <person name="Muthusamy B."/>
            <person name="Yadav A.K."/>
            <person name="Shrivastava P."/>
            <person name="Marimuthu A."/>
            <person name="Anand S."/>
            <person name="Sundaram H."/>
            <person name="Kingsbury R."/>
            <person name="Harsha H.C."/>
            <person name="Nair B."/>
            <person name="Prasad T.S."/>
            <person name="Chauhan D.S."/>
            <person name="Katoch K."/>
            <person name="Katoch V.M."/>
            <person name="Kumar P."/>
            <person name="Chaerkady R."/>
            <person name="Ramachandran S."/>
            <person name="Dash D."/>
            <person name="Pandey A."/>
        </authorList>
    </citation>
    <scope>IDENTIFICATION BY MASS SPECTROMETRY [LARGE SCALE ANALYSIS]</scope>
    <source>
        <strain>ATCC 25618 / H37Rv</strain>
    </source>
</reference>